<proteinExistence type="inferred from homology"/>
<organism>
    <name type="scientific">Rippkaea orientalis (strain PCC 8801 / RF-1)</name>
    <name type="common">Cyanothece sp. (strain PCC 8801)</name>
    <dbReference type="NCBI Taxonomy" id="41431"/>
    <lineage>
        <taxon>Bacteria</taxon>
        <taxon>Bacillati</taxon>
        <taxon>Cyanobacteriota</taxon>
        <taxon>Cyanophyceae</taxon>
        <taxon>Oscillatoriophycideae</taxon>
        <taxon>Chroococcales</taxon>
        <taxon>Aphanothecaceae</taxon>
        <taxon>Rippkaea</taxon>
        <taxon>Rippkaea orientalis</taxon>
    </lineage>
</organism>
<name>RL23_RIPO1</name>
<gene>
    <name evidence="1" type="primary">rplW</name>
    <name evidence="1" type="synonym">rpl23</name>
    <name type="ordered locus">PCC8801_0250</name>
</gene>
<reference key="1">
    <citation type="journal article" date="2011" name="MBio">
        <title>Novel metabolic attributes of the genus Cyanothece, comprising a group of unicellular nitrogen-fixing Cyanobacteria.</title>
        <authorList>
            <person name="Bandyopadhyay A."/>
            <person name="Elvitigala T."/>
            <person name="Welsh E."/>
            <person name="Stockel J."/>
            <person name="Liberton M."/>
            <person name="Min H."/>
            <person name="Sherman L.A."/>
            <person name="Pakrasi H.B."/>
        </authorList>
    </citation>
    <scope>NUCLEOTIDE SEQUENCE [LARGE SCALE GENOMIC DNA]</scope>
    <source>
        <strain>PCC 8801 / RF-1</strain>
    </source>
</reference>
<dbReference type="EMBL" id="CP001287">
    <property type="protein sequence ID" value="ACK64353.1"/>
    <property type="molecule type" value="Genomic_DNA"/>
</dbReference>
<dbReference type="RefSeq" id="WP_012593630.1">
    <property type="nucleotide sequence ID" value="NC_011726.1"/>
</dbReference>
<dbReference type="SMR" id="B7K333"/>
<dbReference type="STRING" id="41431.PCC8801_0250"/>
<dbReference type="KEGG" id="cyp:PCC8801_0250"/>
<dbReference type="eggNOG" id="COG0089">
    <property type="taxonomic scope" value="Bacteria"/>
</dbReference>
<dbReference type="HOGENOM" id="CLU_037562_3_2_3"/>
<dbReference type="OrthoDB" id="9793353at2"/>
<dbReference type="Proteomes" id="UP000008204">
    <property type="component" value="Chromosome"/>
</dbReference>
<dbReference type="GO" id="GO:1990904">
    <property type="term" value="C:ribonucleoprotein complex"/>
    <property type="evidence" value="ECO:0007669"/>
    <property type="project" value="UniProtKB-KW"/>
</dbReference>
<dbReference type="GO" id="GO:0005840">
    <property type="term" value="C:ribosome"/>
    <property type="evidence" value="ECO:0007669"/>
    <property type="project" value="UniProtKB-KW"/>
</dbReference>
<dbReference type="GO" id="GO:0019843">
    <property type="term" value="F:rRNA binding"/>
    <property type="evidence" value="ECO:0007669"/>
    <property type="project" value="UniProtKB-UniRule"/>
</dbReference>
<dbReference type="GO" id="GO:0003735">
    <property type="term" value="F:structural constituent of ribosome"/>
    <property type="evidence" value="ECO:0007669"/>
    <property type="project" value="InterPro"/>
</dbReference>
<dbReference type="GO" id="GO:0006412">
    <property type="term" value="P:translation"/>
    <property type="evidence" value="ECO:0007669"/>
    <property type="project" value="UniProtKB-UniRule"/>
</dbReference>
<dbReference type="FunFam" id="3.30.70.330:FF:000001">
    <property type="entry name" value="50S ribosomal protein L23"/>
    <property type="match status" value="1"/>
</dbReference>
<dbReference type="Gene3D" id="3.30.70.330">
    <property type="match status" value="1"/>
</dbReference>
<dbReference type="HAMAP" id="MF_01369_B">
    <property type="entry name" value="Ribosomal_uL23_B"/>
    <property type="match status" value="1"/>
</dbReference>
<dbReference type="InterPro" id="IPR012677">
    <property type="entry name" value="Nucleotide-bd_a/b_plait_sf"/>
</dbReference>
<dbReference type="InterPro" id="IPR013025">
    <property type="entry name" value="Ribosomal_uL23-like"/>
</dbReference>
<dbReference type="InterPro" id="IPR012678">
    <property type="entry name" value="Ribosomal_uL23/eL15/eS24_sf"/>
</dbReference>
<dbReference type="InterPro" id="IPR001014">
    <property type="entry name" value="Ribosomal_uL23_CS"/>
</dbReference>
<dbReference type="NCBIfam" id="NF004363">
    <property type="entry name" value="PRK05738.2-4"/>
    <property type="match status" value="1"/>
</dbReference>
<dbReference type="NCBIfam" id="NF004368">
    <property type="entry name" value="PRK05738.3-4"/>
    <property type="match status" value="1"/>
</dbReference>
<dbReference type="PANTHER" id="PTHR11620">
    <property type="entry name" value="60S RIBOSOMAL PROTEIN L23A"/>
    <property type="match status" value="1"/>
</dbReference>
<dbReference type="Pfam" id="PF00276">
    <property type="entry name" value="Ribosomal_L23"/>
    <property type="match status" value="1"/>
</dbReference>
<dbReference type="SUPFAM" id="SSF54189">
    <property type="entry name" value="Ribosomal proteins S24e, L23 and L15e"/>
    <property type="match status" value="1"/>
</dbReference>
<dbReference type="PROSITE" id="PS00050">
    <property type="entry name" value="RIBOSOMAL_L23"/>
    <property type="match status" value="1"/>
</dbReference>
<sequence>MIPKNPRQLADLVLKPIITEKATRLLENNKYVFEVVPQATKPDIKAAIESLFDVSVIKVNTVRPPRKKKRVGRFIGYKPLYKRAIVTLQDGDTITLFPEV</sequence>
<keyword id="KW-1185">Reference proteome</keyword>
<keyword id="KW-0687">Ribonucleoprotein</keyword>
<keyword id="KW-0689">Ribosomal protein</keyword>
<keyword id="KW-0694">RNA-binding</keyword>
<keyword id="KW-0699">rRNA-binding</keyword>
<evidence type="ECO:0000255" key="1">
    <source>
        <dbReference type="HAMAP-Rule" id="MF_01369"/>
    </source>
</evidence>
<evidence type="ECO:0000305" key="2"/>
<comment type="function">
    <text evidence="1">One of the early assembly proteins it binds 23S rRNA. One of the proteins that surrounds the polypeptide exit tunnel on the outside of the ribosome. Forms the main docking site for trigger factor binding to the ribosome.</text>
</comment>
<comment type="subunit">
    <text evidence="1">Part of the 50S ribosomal subunit. Contacts protein L29, and trigger factor when it is bound to the ribosome.</text>
</comment>
<comment type="similarity">
    <text evidence="1">Belongs to the universal ribosomal protein uL23 family.</text>
</comment>
<protein>
    <recommendedName>
        <fullName evidence="1">Large ribosomal subunit protein uL23</fullName>
    </recommendedName>
    <alternativeName>
        <fullName evidence="2">50S ribosomal protein L23</fullName>
    </alternativeName>
</protein>
<accession>B7K333</accession>
<feature type="chain" id="PRO_1000144561" description="Large ribosomal subunit protein uL23">
    <location>
        <begin position="1"/>
        <end position="100"/>
    </location>
</feature>